<sequence length="427" mass="46096">MESLTLQPIARVDGTINLPGSKSVSNRALLLAALAHGKTVLTNLLDSDDVRHMLNALTALGVSYTLSADRTRCEIIGNGGPLHAEGALELFLGNAGTAMRPLAAALCLGSNDIVLTGEPRMKERPIGHLVDALRLGGAKITYLEQENYPPLRLQGGFTGGNVDVDGSVSSQFLTALLMTAPLAPEDTVIRIKGDLVSKPYIDITLNLMKTFGVEIENQHYQQFVVKGGQSYQSPGTYLVEGDASSASYFLAAAAIKGGTVKVTGIGRNSMQGDIRFADVLEKMGATICWGDDYISCTRGELNAIDMDMNHIPDAAMTIATAALFAKGTTTLRNIYNWRVKETDRLFAMATELRKVGAEVEEGHDYIRITPPEKLNFAEIATYNDHRMAMCFSLVALSDTPVTILDPKCTAKTFPDYFEQLARISQAA</sequence>
<keyword id="KW-0028">Amino-acid biosynthesis</keyword>
<keyword id="KW-0057">Aromatic amino acid biosynthesis</keyword>
<keyword id="KW-0963">Cytoplasm</keyword>
<keyword id="KW-1185">Reference proteome</keyword>
<keyword id="KW-0808">Transferase</keyword>
<accession>B7LDA0</accession>
<feature type="chain" id="PRO_1000124686" description="3-phosphoshikimate 1-carboxyvinyltransferase">
    <location>
        <begin position="1"/>
        <end position="427"/>
    </location>
</feature>
<feature type="active site" description="Proton acceptor" evidence="1">
    <location>
        <position position="313"/>
    </location>
</feature>
<feature type="binding site" evidence="1">
    <location>
        <position position="22"/>
    </location>
    <ligand>
        <name>3-phosphoshikimate</name>
        <dbReference type="ChEBI" id="CHEBI:145989"/>
    </ligand>
</feature>
<feature type="binding site" evidence="1">
    <location>
        <position position="22"/>
    </location>
    <ligand>
        <name>phosphoenolpyruvate</name>
        <dbReference type="ChEBI" id="CHEBI:58702"/>
    </ligand>
</feature>
<feature type="binding site" evidence="1">
    <location>
        <position position="23"/>
    </location>
    <ligand>
        <name>3-phosphoshikimate</name>
        <dbReference type="ChEBI" id="CHEBI:145989"/>
    </ligand>
</feature>
<feature type="binding site" evidence="1">
    <location>
        <position position="27"/>
    </location>
    <ligand>
        <name>3-phosphoshikimate</name>
        <dbReference type="ChEBI" id="CHEBI:145989"/>
    </ligand>
</feature>
<feature type="binding site" evidence="1">
    <location>
        <position position="96"/>
    </location>
    <ligand>
        <name>phosphoenolpyruvate</name>
        <dbReference type="ChEBI" id="CHEBI:58702"/>
    </ligand>
</feature>
<feature type="binding site" evidence="1">
    <location>
        <position position="124"/>
    </location>
    <ligand>
        <name>phosphoenolpyruvate</name>
        <dbReference type="ChEBI" id="CHEBI:58702"/>
    </ligand>
</feature>
<feature type="binding site" evidence="1">
    <location>
        <position position="169"/>
    </location>
    <ligand>
        <name>3-phosphoshikimate</name>
        <dbReference type="ChEBI" id="CHEBI:145989"/>
    </ligand>
</feature>
<feature type="binding site" evidence="1">
    <location>
        <position position="170"/>
    </location>
    <ligand>
        <name>3-phosphoshikimate</name>
        <dbReference type="ChEBI" id="CHEBI:145989"/>
    </ligand>
</feature>
<feature type="binding site" evidence="1">
    <location>
        <position position="171"/>
    </location>
    <ligand>
        <name>3-phosphoshikimate</name>
        <dbReference type="ChEBI" id="CHEBI:145989"/>
    </ligand>
</feature>
<feature type="binding site" evidence="1">
    <location>
        <position position="171"/>
    </location>
    <ligand>
        <name>phosphoenolpyruvate</name>
        <dbReference type="ChEBI" id="CHEBI:58702"/>
    </ligand>
</feature>
<feature type="binding site" evidence="1">
    <location>
        <position position="197"/>
    </location>
    <ligand>
        <name>3-phosphoshikimate</name>
        <dbReference type="ChEBI" id="CHEBI:145989"/>
    </ligand>
</feature>
<feature type="binding site" evidence="1">
    <location>
        <position position="313"/>
    </location>
    <ligand>
        <name>3-phosphoshikimate</name>
        <dbReference type="ChEBI" id="CHEBI:145989"/>
    </ligand>
</feature>
<feature type="binding site" evidence="1">
    <location>
        <position position="336"/>
    </location>
    <ligand>
        <name>3-phosphoshikimate</name>
        <dbReference type="ChEBI" id="CHEBI:145989"/>
    </ligand>
</feature>
<feature type="binding site" evidence="1">
    <location>
        <position position="340"/>
    </location>
    <ligand>
        <name>3-phosphoshikimate</name>
        <dbReference type="ChEBI" id="CHEBI:145989"/>
    </ligand>
</feature>
<feature type="binding site" evidence="1">
    <location>
        <position position="344"/>
    </location>
    <ligand>
        <name>phosphoenolpyruvate</name>
        <dbReference type="ChEBI" id="CHEBI:58702"/>
    </ligand>
</feature>
<feature type="binding site" evidence="1">
    <location>
        <position position="386"/>
    </location>
    <ligand>
        <name>phosphoenolpyruvate</name>
        <dbReference type="ChEBI" id="CHEBI:58702"/>
    </ligand>
</feature>
<feature type="binding site" evidence="1">
    <location>
        <position position="411"/>
    </location>
    <ligand>
        <name>phosphoenolpyruvate</name>
        <dbReference type="ChEBI" id="CHEBI:58702"/>
    </ligand>
</feature>
<gene>
    <name evidence="1" type="primary">aroA</name>
    <name type="ordered locus">EC55989_0953</name>
</gene>
<protein>
    <recommendedName>
        <fullName evidence="1">3-phosphoshikimate 1-carboxyvinyltransferase</fullName>
        <ecNumber evidence="1">2.5.1.19</ecNumber>
    </recommendedName>
    <alternativeName>
        <fullName evidence="1">5-enolpyruvylshikimate-3-phosphate synthase</fullName>
        <shortName evidence="1">EPSP synthase</shortName>
        <shortName evidence="1">EPSPS</shortName>
    </alternativeName>
</protein>
<dbReference type="EC" id="2.5.1.19" evidence="1"/>
<dbReference type="EMBL" id="CU928145">
    <property type="protein sequence ID" value="CAU96817.1"/>
    <property type="molecule type" value="Genomic_DNA"/>
</dbReference>
<dbReference type="RefSeq" id="WP_000445231.1">
    <property type="nucleotide sequence ID" value="NC_011748.1"/>
</dbReference>
<dbReference type="SMR" id="B7LDA0"/>
<dbReference type="GeneID" id="93776510"/>
<dbReference type="KEGG" id="eck:EC55989_0953"/>
<dbReference type="HOGENOM" id="CLU_024321_0_0_6"/>
<dbReference type="UniPathway" id="UPA00053">
    <property type="reaction ID" value="UER00089"/>
</dbReference>
<dbReference type="Proteomes" id="UP000000746">
    <property type="component" value="Chromosome"/>
</dbReference>
<dbReference type="GO" id="GO:0005737">
    <property type="term" value="C:cytoplasm"/>
    <property type="evidence" value="ECO:0007669"/>
    <property type="project" value="UniProtKB-SubCell"/>
</dbReference>
<dbReference type="GO" id="GO:0003866">
    <property type="term" value="F:3-phosphoshikimate 1-carboxyvinyltransferase activity"/>
    <property type="evidence" value="ECO:0007669"/>
    <property type="project" value="UniProtKB-UniRule"/>
</dbReference>
<dbReference type="GO" id="GO:0008652">
    <property type="term" value="P:amino acid biosynthetic process"/>
    <property type="evidence" value="ECO:0007669"/>
    <property type="project" value="UniProtKB-KW"/>
</dbReference>
<dbReference type="GO" id="GO:0009073">
    <property type="term" value="P:aromatic amino acid family biosynthetic process"/>
    <property type="evidence" value="ECO:0007669"/>
    <property type="project" value="UniProtKB-KW"/>
</dbReference>
<dbReference type="GO" id="GO:0009423">
    <property type="term" value="P:chorismate biosynthetic process"/>
    <property type="evidence" value="ECO:0007669"/>
    <property type="project" value="UniProtKB-UniRule"/>
</dbReference>
<dbReference type="CDD" id="cd01554">
    <property type="entry name" value="EPT-like"/>
    <property type="match status" value="1"/>
</dbReference>
<dbReference type="FunFam" id="3.65.10.10:FF:000003">
    <property type="entry name" value="3-phosphoshikimate 1-carboxyvinyltransferase"/>
    <property type="match status" value="1"/>
</dbReference>
<dbReference type="FunFam" id="3.65.10.10:FF:000004">
    <property type="entry name" value="3-phosphoshikimate 1-carboxyvinyltransferase"/>
    <property type="match status" value="1"/>
</dbReference>
<dbReference type="Gene3D" id="3.65.10.10">
    <property type="entry name" value="Enolpyruvate transferase domain"/>
    <property type="match status" value="2"/>
</dbReference>
<dbReference type="HAMAP" id="MF_00210">
    <property type="entry name" value="EPSP_synth"/>
    <property type="match status" value="1"/>
</dbReference>
<dbReference type="InterPro" id="IPR001986">
    <property type="entry name" value="Enolpyruvate_Tfrase_dom"/>
</dbReference>
<dbReference type="InterPro" id="IPR036968">
    <property type="entry name" value="Enolpyruvate_Tfrase_sf"/>
</dbReference>
<dbReference type="InterPro" id="IPR006264">
    <property type="entry name" value="EPSP_synthase"/>
</dbReference>
<dbReference type="InterPro" id="IPR023193">
    <property type="entry name" value="EPSP_synthase_CS"/>
</dbReference>
<dbReference type="InterPro" id="IPR013792">
    <property type="entry name" value="RNA3'P_cycl/enolpyr_Trfase_a/b"/>
</dbReference>
<dbReference type="NCBIfam" id="TIGR01356">
    <property type="entry name" value="aroA"/>
    <property type="match status" value="1"/>
</dbReference>
<dbReference type="PANTHER" id="PTHR21090">
    <property type="entry name" value="AROM/DEHYDROQUINATE SYNTHASE"/>
    <property type="match status" value="1"/>
</dbReference>
<dbReference type="PANTHER" id="PTHR21090:SF5">
    <property type="entry name" value="PENTAFUNCTIONAL AROM POLYPEPTIDE"/>
    <property type="match status" value="1"/>
</dbReference>
<dbReference type="Pfam" id="PF00275">
    <property type="entry name" value="EPSP_synthase"/>
    <property type="match status" value="1"/>
</dbReference>
<dbReference type="PIRSF" id="PIRSF000505">
    <property type="entry name" value="EPSPS"/>
    <property type="match status" value="1"/>
</dbReference>
<dbReference type="SUPFAM" id="SSF55205">
    <property type="entry name" value="EPT/RTPC-like"/>
    <property type="match status" value="1"/>
</dbReference>
<dbReference type="PROSITE" id="PS00104">
    <property type="entry name" value="EPSP_SYNTHASE_1"/>
    <property type="match status" value="1"/>
</dbReference>
<dbReference type="PROSITE" id="PS00885">
    <property type="entry name" value="EPSP_SYNTHASE_2"/>
    <property type="match status" value="1"/>
</dbReference>
<evidence type="ECO:0000255" key="1">
    <source>
        <dbReference type="HAMAP-Rule" id="MF_00210"/>
    </source>
</evidence>
<comment type="function">
    <text evidence="1">Catalyzes the transfer of the enolpyruvyl moiety of phosphoenolpyruvate (PEP) to the 5-hydroxyl of shikimate-3-phosphate (S3P) to produce enolpyruvyl shikimate-3-phosphate and inorganic phosphate.</text>
</comment>
<comment type="catalytic activity">
    <reaction evidence="1">
        <text>3-phosphoshikimate + phosphoenolpyruvate = 5-O-(1-carboxyvinyl)-3-phosphoshikimate + phosphate</text>
        <dbReference type="Rhea" id="RHEA:21256"/>
        <dbReference type="ChEBI" id="CHEBI:43474"/>
        <dbReference type="ChEBI" id="CHEBI:57701"/>
        <dbReference type="ChEBI" id="CHEBI:58702"/>
        <dbReference type="ChEBI" id="CHEBI:145989"/>
        <dbReference type="EC" id="2.5.1.19"/>
    </reaction>
    <physiologicalReaction direction="left-to-right" evidence="1">
        <dbReference type="Rhea" id="RHEA:21257"/>
    </physiologicalReaction>
</comment>
<comment type="pathway">
    <text evidence="1">Metabolic intermediate biosynthesis; chorismate biosynthesis; chorismate from D-erythrose 4-phosphate and phosphoenolpyruvate: step 6/7.</text>
</comment>
<comment type="subunit">
    <text evidence="1">Monomer.</text>
</comment>
<comment type="subcellular location">
    <subcellularLocation>
        <location evidence="1">Cytoplasm</location>
    </subcellularLocation>
</comment>
<comment type="similarity">
    <text evidence="1">Belongs to the EPSP synthase family.</text>
</comment>
<name>AROA_ECO55</name>
<organism>
    <name type="scientific">Escherichia coli (strain 55989 / EAEC)</name>
    <dbReference type="NCBI Taxonomy" id="585055"/>
    <lineage>
        <taxon>Bacteria</taxon>
        <taxon>Pseudomonadati</taxon>
        <taxon>Pseudomonadota</taxon>
        <taxon>Gammaproteobacteria</taxon>
        <taxon>Enterobacterales</taxon>
        <taxon>Enterobacteriaceae</taxon>
        <taxon>Escherichia</taxon>
    </lineage>
</organism>
<proteinExistence type="inferred from homology"/>
<reference key="1">
    <citation type="journal article" date="2009" name="PLoS Genet.">
        <title>Organised genome dynamics in the Escherichia coli species results in highly diverse adaptive paths.</title>
        <authorList>
            <person name="Touchon M."/>
            <person name="Hoede C."/>
            <person name="Tenaillon O."/>
            <person name="Barbe V."/>
            <person name="Baeriswyl S."/>
            <person name="Bidet P."/>
            <person name="Bingen E."/>
            <person name="Bonacorsi S."/>
            <person name="Bouchier C."/>
            <person name="Bouvet O."/>
            <person name="Calteau A."/>
            <person name="Chiapello H."/>
            <person name="Clermont O."/>
            <person name="Cruveiller S."/>
            <person name="Danchin A."/>
            <person name="Diard M."/>
            <person name="Dossat C."/>
            <person name="Karoui M.E."/>
            <person name="Frapy E."/>
            <person name="Garry L."/>
            <person name="Ghigo J.M."/>
            <person name="Gilles A.M."/>
            <person name="Johnson J."/>
            <person name="Le Bouguenec C."/>
            <person name="Lescat M."/>
            <person name="Mangenot S."/>
            <person name="Martinez-Jehanne V."/>
            <person name="Matic I."/>
            <person name="Nassif X."/>
            <person name="Oztas S."/>
            <person name="Petit M.A."/>
            <person name="Pichon C."/>
            <person name="Rouy Z."/>
            <person name="Ruf C.S."/>
            <person name="Schneider D."/>
            <person name="Tourret J."/>
            <person name="Vacherie B."/>
            <person name="Vallenet D."/>
            <person name="Medigue C."/>
            <person name="Rocha E.P.C."/>
            <person name="Denamur E."/>
        </authorList>
    </citation>
    <scope>NUCLEOTIDE SEQUENCE [LARGE SCALE GENOMIC DNA]</scope>
    <source>
        <strain>55989 / EAEC</strain>
    </source>
</reference>